<organism>
    <name type="scientific">Haemophilus ducreyi (strain 35000HP / ATCC 700724)</name>
    <dbReference type="NCBI Taxonomy" id="233412"/>
    <lineage>
        <taxon>Bacteria</taxon>
        <taxon>Pseudomonadati</taxon>
        <taxon>Pseudomonadota</taxon>
        <taxon>Gammaproteobacteria</taxon>
        <taxon>Pasteurellales</taxon>
        <taxon>Pasteurellaceae</taxon>
        <taxon>Haemophilus</taxon>
    </lineage>
</organism>
<name>KAD_HAEDU</name>
<comment type="function">
    <text evidence="1">Catalyzes the reversible transfer of the terminal phosphate group between ATP and AMP. Plays an important role in cellular energy homeostasis and in adenine nucleotide metabolism.</text>
</comment>
<comment type="catalytic activity">
    <reaction evidence="1">
        <text>AMP + ATP = 2 ADP</text>
        <dbReference type="Rhea" id="RHEA:12973"/>
        <dbReference type="ChEBI" id="CHEBI:30616"/>
        <dbReference type="ChEBI" id="CHEBI:456215"/>
        <dbReference type="ChEBI" id="CHEBI:456216"/>
        <dbReference type="EC" id="2.7.4.3"/>
    </reaction>
</comment>
<comment type="pathway">
    <text evidence="1">Purine metabolism; AMP biosynthesis via salvage pathway; AMP from ADP: step 1/1.</text>
</comment>
<comment type="subunit">
    <text evidence="1">Monomer.</text>
</comment>
<comment type="subcellular location">
    <subcellularLocation>
        <location evidence="1">Cytoplasm</location>
    </subcellularLocation>
</comment>
<comment type="domain">
    <text evidence="1">Consists of three domains, a large central CORE domain and two small peripheral domains, NMPbind and LID, which undergo movements during catalysis. The LID domain closes over the site of phosphoryl transfer upon ATP binding. Assembling and dissambling the active center during each catalytic cycle provides an effective means to prevent ATP hydrolysis.</text>
</comment>
<comment type="similarity">
    <text evidence="1">Belongs to the adenylate kinase family.</text>
</comment>
<protein>
    <recommendedName>
        <fullName evidence="1">Adenylate kinase</fullName>
        <shortName evidence="1">AK</shortName>
        <ecNumber evidence="1">2.7.4.3</ecNumber>
    </recommendedName>
    <alternativeName>
        <fullName evidence="1">ATP-AMP transphosphorylase</fullName>
    </alternativeName>
    <alternativeName>
        <fullName evidence="1">ATP:AMP phosphotransferase</fullName>
    </alternativeName>
    <alternativeName>
        <fullName evidence="1">Adenylate monophosphate kinase</fullName>
    </alternativeName>
</protein>
<evidence type="ECO:0000255" key="1">
    <source>
        <dbReference type="HAMAP-Rule" id="MF_00235"/>
    </source>
</evidence>
<sequence>MKVILLGAPGAGKGTQAQFIMHKFGIPQISTGDMFRAAIKEGTELGKQAKALMDQGKLVPDDLTVALVKDRIAQPDCAHGFLLDGFPRTIPQADALKDAGVKIDLVLEFDVADEVIVERMSGRRVHQPSGRTYHIIYNPPKVAGQDDITGEELITRADDKAETVLERLAVYHQQTKPLIAYYIAEAEKGNTRYERLDGTKPVEQVSAELANIFNQ</sequence>
<accession>Q7VMY0</accession>
<dbReference type="EC" id="2.7.4.3" evidence="1"/>
<dbReference type="EMBL" id="AE017143">
    <property type="protein sequence ID" value="AAP95722.1"/>
    <property type="molecule type" value="Genomic_DNA"/>
</dbReference>
<dbReference type="RefSeq" id="WP_010944772.1">
    <property type="nucleotide sequence ID" value="NC_002940.2"/>
</dbReference>
<dbReference type="SMR" id="Q7VMY0"/>
<dbReference type="STRING" id="233412.HD_0826"/>
<dbReference type="KEGG" id="hdu:HD_0826"/>
<dbReference type="eggNOG" id="COG0563">
    <property type="taxonomic scope" value="Bacteria"/>
</dbReference>
<dbReference type="HOGENOM" id="CLU_032354_1_2_6"/>
<dbReference type="OrthoDB" id="9805030at2"/>
<dbReference type="UniPathway" id="UPA00588">
    <property type="reaction ID" value="UER00649"/>
</dbReference>
<dbReference type="Proteomes" id="UP000001022">
    <property type="component" value="Chromosome"/>
</dbReference>
<dbReference type="GO" id="GO:0005737">
    <property type="term" value="C:cytoplasm"/>
    <property type="evidence" value="ECO:0007669"/>
    <property type="project" value="UniProtKB-SubCell"/>
</dbReference>
<dbReference type="GO" id="GO:0004017">
    <property type="term" value="F:adenylate kinase activity"/>
    <property type="evidence" value="ECO:0007669"/>
    <property type="project" value="UniProtKB-UniRule"/>
</dbReference>
<dbReference type="GO" id="GO:0005524">
    <property type="term" value="F:ATP binding"/>
    <property type="evidence" value="ECO:0007669"/>
    <property type="project" value="UniProtKB-UniRule"/>
</dbReference>
<dbReference type="GO" id="GO:0044209">
    <property type="term" value="P:AMP salvage"/>
    <property type="evidence" value="ECO:0007669"/>
    <property type="project" value="UniProtKB-UniRule"/>
</dbReference>
<dbReference type="CDD" id="cd01428">
    <property type="entry name" value="ADK"/>
    <property type="match status" value="1"/>
</dbReference>
<dbReference type="FunFam" id="3.40.50.300:FF:000106">
    <property type="entry name" value="Adenylate kinase mitochondrial"/>
    <property type="match status" value="1"/>
</dbReference>
<dbReference type="Gene3D" id="3.40.50.300">
    <property type="entry name" value="P-loop containing nucleotide triphosphate hydrolases"/>
    <property type="match status" value="1"/>
</dbReference>
<dbReference type="HAMAP" id="MF_00235">
    <property type="entry name" value="Adenylate_kinase_Adk"/>
    <property type="match status" value="1"/>
</dbReference>
<dbReference type="InterPro" id="IPR006259">
    <property type="entry name" value="Adenyl_kin_sub"/>
</dbReference>
<dbReference type="InterPro" id="IPR000850">
    <property type="entry name" value="Adenylat/UMP-CMP_kin"/>
</dbReference>
<dbReference type="InterPro" id="IPR033690">
    <property type="entry name" value="Adenylat_kinase_CS"/>
</dbReference>
<dbReference type="InterPro" id="IPR007862">
    <property type="entry name" value="Adenylate_kinase_lid-dom"/>
</dbReference>
<dbReference type="InterPro" id="IPR027417">
    <property type="entry name" value="P-loop_NTPase"/>
</dbReference>
<dbReference type="NCBIfam" id="TIGR01351">
    <property type="entry name" value="adk"/>
    <property type="match status" value="1"/>
</dbReference>
<dbReference type="NCBIfam" id="NF001379">
    <property type="entry name" value="PRK00279.1-1"/>
    <property type="match status" value="1"/>
</dbReference>
<dbReference type="NCBIfam" id="NF001380">
    <property type="entry name" value="PRK00279.1-2"/>
    <property type="match status" value="1"/>
</dbReference>
<dbReference type="NCBIfam" id="NF001381">
    <property type="entry name" value="PRK00279.1-3"/>
    <property type="match status" value="1"/>
</dbReference>
<dbReference type="PANTHER" id="PTHR23359">
    <property type="entry name" value="NUCLEOTIDE KINASE"/>
    <property type="match status" value="1"/>
</dbReference>
<dbReference type="Pfam" id="PF00406">
    <property type="entry name" value="ADK"/>
    <property type="match status" value="1"/>
</dbReference>
<dbReference type="Pfam" id="PF05191">
    <property type="entry name" value="ADK_lid"/>
    <property type="match status" value="1"/>
</dbReference>
<dbReference type="PRINTS" id="PR00094">
    <property type="entry name" value="ADENYLTKNASE"/>
</dbReference>
<dbReference type="SUPFAM" id="SSF52540">
    <property type="entry name" value="P-loop containing nucleoside triphosphate hydrolases"/>
    <property type="match status" value="1"/>
</dbReference>
<dbReference type="PROSITE" id="PS00113">
    <property type="entry name" value="ADENYLATE_KINASE"/>
    <property type="match status" value="1"/>
</dbReference>
<feature type="chain" id="PRO_0000158775" description="Adenylate kinase">
    <location>
        <begin position="1"/>
        <end position="215"/>
    </location>
</feature>
<feature type="region of interest" description="NMP" evidence="1">
    <location>
        <begin position="30"/>
        <end position="59"/>
    </location>
</feature>
<feature type="region of interest" description="LID" evidence="1">
    <location>
        <begin position="122"/>
        <end position="159"/>
    </location>
</feature>
<feature type="binding site" evidence="1">
    <location>
        <begin position="10"/>
        <end position="15"/>
    </location>
    <ligand>
        <name>ATP</name>
        <dbReference type="ChEBI" id="CHEBI:30616"/>
    </ligand>
</feature>
<feature type="binding site" evidence="1">
    <location>
        <position position="31"/>
    </location>
    <ligand>
        <name>AMP</name>
        <dbReference type="ChEBI" id="CHEBI:456215"/>
    </ligand>
</feature>
<feature type="binding site" evidence="1">
    <location>
        <position position="36"/>
    </location>
    <ligand>
        <name>AMP</name>
        <dbReference type="ChEBI" id="CHEBI:456215"/>
    </ligand>
</feature>
<feature type="binding site" evidence="1">
    <location>
        <begin position="57"/>
        <end position="59"/>
    </location>
    <ligand>
        <name>AMP</name>
        <dbReference type="ChEBI" id="CHEBI:456215"/>
    </ligand>
</feature>
<feature type="binding site" evidence="1">
    <location>
        <begin position="85"/>
        <end position="88"/>
    </location>
    <ligand>
        <name>AMP</name>
        <dbReference type="ChEBI" id="CHEBI:456215"/>
    </ligand>
</feature>
<feature type="binding site" evidence="1">
    <location>
        <position position="92"/>
    </location>
    <ligand>
        <name>AMP</name>
        <dbReference type="ChEBI" id="CHEBI:456215"/>
    </ligand>
</feature>
<feature type="binding site" evidence="1">
    <location>
        <position position="123"/>
    </location>
    <ligand>
        <name>ATP</name>
        <dbReference type="ChEBI" id="CHEBI:30616"/>
    </ligand>
</feature>
<feature type="binding site" evidence="1">
    <location>
        <begin position="132"/>
        <end position="133"/>
    </location>
    <ligand>
        <name>ATP</name>
        <dbReference type="ChEBI" id="CHEBI:30616"/>
    </ligand>
</feature>
<feature type="binding site" evidence="1">
    <location>
        <position position="156"/>
    </location>
    <ligand>
        <name>AMP</name>
        <dbReference type="ChEBI" id="CHEBI:456215"/>
    </ligand>
</feature>
<feature type="binding site" evidence="1">
    <location>
        <position position="167"/>
    </location>
    <ligand>
        <name>AMP</name>
        <dbReference type="ChEBI" id="CHEBI:456215"/>
    </ligand>
</feature>
<feature type="binding site" evidence="1">
    <location>
        <position position="200"/>
    </location>
    <ligand>
        <name>ATP</name>
        <dbReference type="ChEBI" id="CHEBI:30616"/>
    </ligand>
</feature>
<proteinExistence type="inferred from homology"/>
<reference key="1">
    <citation type="submission" date="2003-06" db="EMBL/GenBank/DDBJ databases">
        <title>The complete genome sequence of Haemophilus ducreyi.</title>
        <authorList>
            <person name="Munson R.S. Jr."/>
            <person name="Ray W.C."/>
            <person name="Mahairas G."/>
            <person name="Sabo P."/>
            <person name="Mungur R."/>
            <person name="Johnson L."/>
            <person name="Nguyen D."/>
            <person name="Wang J."/>
            <person name="Forst C."/>
            <person name="Hood L."/>
        </authorList>
    </citation>
    <scope>NUCLEOTIDE SEQUENCE [LARGE SCALE GENOMIC DNA]</scope>
    <source>
        <strain>35000HP / ATCC 700724</strain>
    </source>
</reference>
<gene>
    <name evidence="1" type="primary">adk</name>
    <name type="ordered locus">HD_0826</name>
</gene>
<keyword id="KW-0067">ATP-binding</keyword>
<keyword id="KW-0963">Cytoplasm</keyword>
<keyword id="KW-0418">Kinase</keyword>
<keyword id="KW-0545">Nucleotide biosynthesis</keyword>
<keyword id="KW-0547">Nucleotide-binding</keyword>
<keyword id="KW-1185">Reference proteome</keyword>
<keyword id="KW-0808">Transferase</keyword>